<sequence length="125" mass="14267">MNSLEQAEDLKAFERRLTEYIHCLQPATGRWRMLLIVVSVCTATGAWNWLIDPETQKVSFFTSLWNHPFFTISCITLIGLFFAGIHKRVVAPSIIAARCRTVLAEYNMSCDDTGKLILKPRPHVQ</sequence>
<organism>
    <name type="scientific">Homo sapiens</name>
    <name type="common">Human</name>
    <dbReference type="NCBI Taxonomy" id="9606"/>
    <lineage>
        <taxon>Eukaryota</taxon>
        <taxon>Metazoa</taxon>
        <taxon>Chordata</taxon>
        <taxon>Craniata</taxon>
        <taxon>Vertebrata</taxon>
        <taxon>Euteleostomi</taxon>
        <taxon>Mammalia</taxon>
        <taxon>Eutheria</taxon>
        <taxon>Euarchontoglires</taxon>
        <taxon>Primates</taxon>
        <taxon>Haplorrhini</taxon>
        <taxon>Catarrhini</taxon>
        <taxon>Hominidae</taxon>
        <taxon>Homo</taxon>
    </lineage>
</organism>
<gene>
    <name type="primary">CNEP1R1</name>
    <name type="synonym">C16orf69</name>
    <name type="synonym">TMEM188</name>
</gene>
<comment type="function">
    <text evidence="2">Forms with the serine/threonine protein phosphatase CTDNEP1 an active complex which dephosphorylates and may activate LPIN1 and LPIN2. LPIN1 and LPIN2 are phosphatidate phosphatases that catalyze the conversion of phosphatidic acid to diacylglycerol and control the metabolism of fatty acids at different levels. May indirectly modulate the lipid composition of nuclear and/or endoplasmic reticulum membranes and be required for proper nuclear membrane morphology and/or dynamics. May also indirectly regulate the production of lipid droplets and triacylglycerol.</text>
</comment>
<comment type="subunit">
    <text evidence="2">Interacts with CTDNEP1; the complex dephosphorylates LPIN1 and LPIN2.</text>
</comment>
<comment type="interaction">
    <interactant intactId="EBI-5323455">
        <id>Q8N9A8</id>
    </interactant>
    <interactant intactId="EBI-5323433">
        <id>O95476</id>
        <label>CTDNEP1</label>
    </interactant>
    <organismsDiffer>false</organismsDiffer>
    <experiments>4</experiments>
</comment>
<comment type="subcellular location">
    <subcellularLocation>
        <location evidence="2">Nucleus membrane</location>
        <topology evidence="2">Multi-pass membrane protein</topology>
    </subcellularLocation>
    <subcellularLocation>
        <location evidence="2">Cytoplasm</location>
    </subcellularLocation>
    <text>Filamentous pattern in the cytoplasm.</text>
</comment>
<comment type="alternative products">
    <event type="alternative splicing"/>
    <isoform>
        <id>Q8N9A8-1</id>
        <name>1</name>
        <sequence type="displayed"/>
    </isoform>
    <isoform>
        <id>Q8N9A8-2</id>
        <name>2</name>
        <sequence type="described" ref="VSP_025126"/>
    </isoform>
    <isoform>
        <id>Q8N9A8-3</id>
        <name>3</name>
        <sequence type="described" ref="VSP_025127 VSP_025128"/>
    </isoform>
</comment>
<comment type="tissue specificity">
    <text evidence="2">Muscle specific with lower expression in other metabolic tissues.</text>
</comment>
<comment type="similarity">
    <text evidence="5">Belongs to the CNEP1R1 family.</text>
</comment>
<accession>Q8N9A8</accession>
<accession>Q4G1A9</accession>
<accession>Q5H9V0</accession>
<accession>Q8NE06</accession>
<proteinExistence type="evidence at protein level"/>
<reference key="1">
    <citation type="journal article" date="2004" name="Nat. Genet.">
        <title>Complete sequencing and characterization of 21,243 full-length human cDNAs.</title>
        <authorList>
            <person name="Ota T."/>
            <person name="Suzuki Y."/>
            <person name="Nishikawa T."/>
            <person name="Otsuki T."/>
            <person name="Sugiyama T."/>
            <person name="Irie R."/>
            <person name="Wakamatsu A."/>
            <person name="Hayashi K."/>
            <person name="Sato H."/>
            <person name="Nagai K."/>
            <person name="Kimura K."/>
            <person name="Makita H."/>
            <person name="Sekine M."/>
            <person name="Obayashi M."/>
            <person name="Nishi T."/>
            <person name="Shibahara T."/>
            <person name="Tanaka T."/>
            <person name="Ishii S."/>
            <person name="Yamamoto J."/>
            <person name="Saito K."/>
            <person name="Kawai Y."/>
            <person name="Isono Y."/>
            <person name="Nakamura Y."/>
            <person name="Nagahari K."/>
            <person name="Murakami K."/>
            <person name="Yasuda T."/>
            <person name="Iwayanagi T."/>
            <person name="Wagatsuma M."/>
            <person name="Shiratori A."/>
            <person name="Sudo H."/>
            <person name="Hosoiri T."/>
            <person name="Kaku Y."/>
            <person name="Kodaira H."/>
            <person name="Kondo H."/>
            <person name="Sugawara M."/>
            <person name="Takahashi M."/>
            <person name="Kanda K."/>
            <person name="Yokoi T."/>
            <person name="Furuya T."/>
            <person name="Kikkawa E."/>
            <person name="Omura Y."/>
            <person name="Abe K."/>
            <person name="Kamihara K."/>
            <person name="Katsuta N."/>
            <person name="Sato K."/>
            <person name="Tanikawa M."/>
            <person name="Yamazaki M."/>
            <person name="Ninomiya K."/>
            <person name="Ishibashi T."/>
            <person name="Yamashita H."/>
            <person name="Murakawa K."/>
            <person name="Fujimori K."/>
            <person name="Tanai H."/>
            <person name="Kimata M."/>
            <person name="Watanabe M."/>
            <person name="Hiraoka S."/>
            <person name="Chiba Y."/>
            <person name="Ishida S."/>
            <person name="Ono Y."/>
            <person name="Takiguchi S."/>
            <person name="Watanabe S."/>
            <person name="Yosida M."/>
            <person name="Hotuta T."/>
            <person name="Kusano J."/>
            <person name="Kanehori K."/>
            <person name="Takahashi-Fujii A."/>
            <person name="Hara H."/>
            <person name="Tanase T.-O."/>
            <person name="Nomura Y."/>
            <person name="Togiya S."/>
            <person name="Komai F."/>
            <person name="Hara R."/>
            <person name="Takeuchi K."/>
            <person name="Arita M."/>
            <person name="Imose N."/>
            <person name="Musashino K."/>
            <person name="Yuuki H."/>
            <person name="Oshima A."/>
            <person name="Sasaki N."/>
            <person name="Aotsuka S."/>
            <person name="Yoshikawa Y."/>
            <person name="Matsunawa H."/>
            <person name="Ichihara T."/>
            <person name="Shiohata N."/>
            <person name="Sano S."/>
            <person name="Moriya S."/>
            <person name="Momiyama H."/>
            <person name="Satoh N."/>
            <person name="Takami S."/>
            <person name="Terashima Y."/>
            <person name="Suzuki O."/>
            <person name="Nakagawa S."/>
            <person name="Senoh A."/>
            <person name="Mizoguchi H."/>
            <person name="Goto Y."/>
            <person name="Shimizu F."/>
            <person name="Wakebe H."/>
            <person name="Hishigaki H."/>
            <person name="Watanabe T."/>
            <person name="Sugiyama A."/>
            <person name="Takemoto M."/>
            <person name="Kawakami B."/>
            <person name="Yamazaki M."/>
            <person name="Watanabe K."/>
            <person name="Kumagai A."/>
            <person name="Itakura S."/>
            <person name="Fukuzumi Y."/>
            <person name="Fujimori Y."/>
            <person name="Komiyama M."/>
            <person name="Tashiro H."/>
            <person name="Tanigami A."/>
            <person name="Fujiwara T."/>
            <person name="Ono T."/>
            <person name="Yamada K."/>
            <person name="Fujii Y."/>
            <person name="Ozaki K."/>
            <person name="Hirao M."/>
            <person name="Ohmori Y."/>
            <person name="Kawabata A."/>
            <person name="Hikiji T."/>
            <person name="Kobatake N."/>
            <person name="Inagaki H."/>
            <person name="Ikema Y."/>
            <person name="Okamoto S."/>
            <person name="Okitani R."/>
            <person name="Kawakami T."/>
            <person name="Noguchi S."/>
            <person name="Itoh T."/>
            <person name="Shigeta K."/>
            <person name="Senba T."/>
            <person name="Matsumura K."/>
            <person name="Nakajima Y."/>
            <person name="Mizuno T."/>
            <person name="Morinaga M."/>
            <person name="Sasaki M."/>
            <person name="Togashi T."/>
            <person name="Oyama M."/>
            <person name="Hata H."/>
            <person name="Watanabe M."/>
            <person name="Komatsu T."/>
            <person name="Mizushima-Sugano J."/>
            <person name="Satoh T."/>
            <person name="Shirai Y."/>
            <person name="Takahashi Y."/>
            <person name="Nakagawa K."/>
            <person name="Okumura K."/>
            <person name="Nagase T."/>
            <person name="Nomura N."/>
            <person name="Kikuchi H."/>
            <person name="Masuho Y."/>
            <person name="Yamashita R."/>
            <person name="Nakai K."/>
            <person name="Yada T."/>
            <person name="Nakamura Y."/>
            <person name="Ohara O."/>
            <person name="Isogai T."/>
            <person name="Sugano S."/>
        </authorList>
    </citation>
    <scope>NUCLEOTIDE SEQUENCE [LARGE SCALE MRNA] (ISOFORM 1)</scope>
</reference>
<reference key="2">
    <citation type="journal article" date="2007" name="BMC Genomics">
        <title>The full-ORF clone resource of the German cDNA consortium.</title>
        <authorList>
            <person name="Bechtel S."/>
            <person name="Rosenfelder H."/>
            <person name="Duda A."/>
            <person name="Schmidt C.P."/>
            <person name="Ernst U."/>
            <person name="Wellenreuther R."/>
            <person name="Mehrle A."/>
            <person name="Schuster C."/>
            <person name="Bahr A."/>
            <person name="Bloecker H."/>
            <person name="Heubner D."/>
            <person name="Hoerlein A."/>
            <person name="Michel G."/>
            <person name="Wedler H."/>
            <person name="Koehrer K."/>
            <person name="Ottenwaelder B."/>
            <person name="Poustka A."/>
            <person name="Wiemann S."/>
            <person name="Schupp I."/>
        </authorList>
    </citation>
    <scope>NUCLEOTIDE SEQUENCE [LARGE SCALE MRNA] (ISOFORM 2)</scope>
    <source>
        <tissue>Adipose tissue</tissue>
    </source>
</reference>
<reference key="3">
    <citation type="journal article" date="2004" name="Nature">
        <title>The sequence and analysis of duplication-rich human chromosome 16.</title>
        <authorList>
            <person name="Martin J."/>
            <person name="Han C."/>
            <person name="Gordon L.A."/>
            <person name="Terry A."/>
            <person name="Prabhakar S."/>
            <person name="She X."/>
            <person name="Xie G."/>
            <person name="Hellsten U."/>
            <person name="Chan Y.M."/>
            <person name="Altherr M."/>
            <person name="Couronne O."/>
            <person name="Aerts A."/>
            <person name="Bajorek E."/>
            <person name="Black S."/>
            <person name="Blumer H."/>
            <person name="Branscomb E."/>
            <person name="Brown N.C."/>
            <person name="Bruno W.J."/>
            <person name="Buckingham J.M."/>
            <person name="Callen D.F."/>
            <person name="Campbell C.S."/>
            <person name="Campbell M.L."/>
            <person name="Campbell E.W."/>
            <person name="Caoile C."/>
            <person name="Challacombe J.F."/>
            <person name="Chasteen L.A."/>
            <person name="Chertkov O."/>
            <person name="Chi H.C."/>
            <person name="Christensen M."/>
            <person name="Clark L.M."/>
            <person name="Cohn J.D."/>
            <person name="Denys M."/>
            <person name="Detter J.C."/>
            <person name="Dickson M."/>
            <person name="Dimitrijevic-Bussod M."/>
            <person name="Escobar J."/>
            <person name="Fawcett J.J."/>
            <person name="Flowers D."/>
            <person name="Fotopulos D."/>
            <person name="Glavina T."/>
            <person name="Gomez M."/>
            <person name="Gonzales E."/>
            <person name="Goodstein D."/>
            <person name="Goodwin L.A."/>
            <person name="Grady D.L."/>
            <person name="Grigoriev I."/>
            <person name="Groza M."/>
            <person name="Hammon N."/>
            <person name="Hawkins T."/>
            <person name="Haydu L."/>
            <person name="Hildebrand C.E."/>
            <person name="Huang W."/>
            <person name="Israni S."/>
            <person name="Jett J."/>
            <person name="Jewett P.B."/>
            <person name="Kadner K."/>
            <person name="Kimball H."/>
            <person name="Kobayashi A."/>
            <person name="Krawczyk M.-C."/>
            <person name="Leyba T."/>
            <person name="Longmire J.L."/>
            <person name="Lopez F."/>
            <person name="Lou Y."/>
            <person name="Lowry S."/>
            <person name="Ludeman T."/>
            <person name="Manohar C.F."/>
            <person name="Mark G.A."/>
            <person name="McMurray K.L."/>
            <person name="Meincke L.J."/>
            <person name="Morgan J."/>
            <person name="Moyzis R.K."/>
            <person name="Mundt M.O."/>
            <person name="Munk A.C."/>
            <person name="Nandkeshwar R.D."/>
            <person name="Pitluck S."/>
            <person name="Pollard M."/>
            <person name="Predki P."/>
            <person name="Parson-Quintana B."/>
            <person name="Ramirez L."/>
            <person name="Rash S."/>
            <person name="Retterer J."/>
            <person name="Ricke D.O."/>
            <person name="Robinson D.L."/>
            <person name="Rodriguez A."/>
            <person name="Salamov A."/>
            <person name="Saunders E.H."/>
            <person name="Scott D."/>
            <person name="Shough T."/>
            <person name="Stallings R.L."/>
            <person name="Stalvey M."/>
            <person name="Sutherland R.D."/>
            <person name="Tapia R."/>
            <person name="Tesmer J.G."/>
            <person name="Thayer N."/>
            <person name="Thompson L.S."/>
            <person name="Tice H."/>
            <person name="Torney D.C."/>
            <person name="Tran-Gyamfi M."/>
            <person name="Tsai M."/>
            <person name="Ulanovsky L.E."/>
            <person name="Ustaszewska A."/>
            <person name="Vo N."/>
            <person name="White P.S."/>
            <person name="Williams A.L."/>
            <person name="Wills P.L."/>
            <person name="Wu J.-R."/>
            <person name="Wu K."/>
            <person name="Yang J."/>
            <person name="DeJong P."/>
            <person name="Bruce D."/>
            <person name="Doggett N.A."/>
            <person name="Deaven L."/>
            <person name="Schmutz J."/>
            <person name="Grimwood J."/>
            <person name="Richardson P."/>
            <person name="Rokhsar D.S."/>
            <person name="Eichler E.E."/>
            <person name="Gilna P."/>
            <person name="Lucas S.M."/>
            <person name="Myers R.M."/>
            <person name="Rubin E.M."/>
            <person name="Pennacchio L.A."/>
        </authorList>
    </citation>
    <scope>NUCLEOTIDE SEQUENCE [LARGE SCALE GENOMIC DNA]</scope>
</reference>
<reference key="4">
    <citation type="journal article" date="2004" name="Genome Res.">
        <title>The status, quality, and expansion of the NIH full-length cDNA project: the Mammalian Gene Collection (MGC).</title>
        <authorList>
            <consortium name="The MGC Project Team"/>
        </authorList>
    </citation>
    <scope>NUCLEOTIDE SEQUENCE [LARGE SCALE MRNA] (ISOFORMS 2 AND 3)</scope>
    <source>
        <tissue>Brain</tissue>
        <tissue>Testis</tissue>
    </source>
</reference>
<reference key="5">
    <citation type="journal article" date="2012" name="J. Biol. Chem.">
        <title>Nuclear envelope phosphatase-regulatory subunit 1 (formerly TMEM188) is the metazoan SPO7 ortholog and functions in the lipin activation pathway.</title>
        <authorList>
            <person name="Han S."/>
            <person name="Bahmanyar S."/>
            <person name="Zhang P."/>
            <person name="Grishin N."/>
            <person name="Oegema K."/>
            <person name="Crooke R."/>
            <person name="Graham M."/>
            <person name="Reue K."/>
            <person name="Dixon J.E."/>
            <person name="Goodman J.M."/>
        </authorList>
    </citation>
    <scope>FUNCTION IN LPIN1 AND LPIN2 DEPHOSPHORYLATION</scope>
    <scope>INTERACTION WITH CTDNEP1</scope>
    <scope>SUBCELLULAR LOCATION</scope>
    <scope>TISSUE SPECIFICITY</scope>
</reference>
<reference key="6">
    <citation type="journal article" date="2012" name="Proc. Natl. Acad. Sci. U.S.A.">
        <title>N-terminal acetylome analyses and functional insights of the N-terminal acetyltransferase NatB.</title>
        <authorList>
            <person name="Van Damme P."/>
            <person name="Lasa M."/>
            <person name="Polevoda B."/>
            <person name="Gazquez C."/>
            <person name="Elosegui-Artola A."/>
            <person name="Kim D.S."/>
            <person name="De Juan-Pardo E."/>
            <person name="Demeyer K."/>
            <person name="Hole K."/>
            <person name="Larrea E."/>
            <person name="Timmerman E."/>
            <person name="Prieto J."/>
            <person name="Arnesen T."/>
            <person name="Sherman F."/>
            <person name="Gevaert K."/>
            <person name="Aldabe R."/>
        </authorList>
    </citation>
    <scope>ACETYLATION [LARGE SCALE ANALYSIS] AT MET-1</scope>
    <scope>IDENTIFICATION BY MASS SPECTROMETRY [LARGE SCALE ANALYSIS]</scope>
</reference>
<protein>
    <recommendedName>
        <fullName>Nuclear envelope phosphatase-regulatory subunit 1</fullName>
        <shortName>NEP1-R1</shortName>
    </recommendedName>
    <alternativeName>
        <fullName>Transmembrane protein 188</fullName>
    </alternativeName>
</protein>
<feature type="chain" id="PRO_0000286615" description="Nuclear envelope phosphatase-regulatory subunit 1">
    <location>
        <begin position="1"/>
        <end position="125"/>
    </location>
</feature>
<feature type="transmembrane region" description="Helical" evidence="1">
    <location>
        <begin position="33"/>
        <end position="53"/>
    </location>
</feature>
<feature type="transmembrane region" description="Helical" evidence="1">
    <location>
        <begin position="65"/>
        <end position="85"/>
    </location>
</feature>
<feature type="modified residue" description="N-acetylmethionine" evidence="6">
    <location>
        <position position="1"/>
    </location>
</feature>
<feature type="splice variant" id="VSP_025126" description="In isoform 2." evidence="3 4">
    <original>E</original>
    <variation>EAPRVVSLIPAVVSGNCQ</variation>
    <location>
        <position position="8"/>
    </location>
</feature>
<feature type="splice variant" id="VSP_025127" description="In isoform 3." evidence="3">
    <original>MLLIVVSVCTATGAW</original>
    <variation>SVLLHIIMESPIFHH</variation>
    <location>
        <begin position="33"/>
        <end position="47"/>
    </location>
</feature>
<feature type="splice variant" id="VSP_025128" description="In isoform 3." evidence="3">
    <location>
        <begin position="48"/>
        <end position="125"/>
    </location>
</feature>
<feature type="sequence conflict" description="In Ref. 2; CAI45924." evidence="5" ref="2">
    <original>R</original>
    <variation>G</variation>
    <location>
        <position position="15"/>
    </location>
</feature>
<feature type="helix" evidence="7">
    <location>
        <begin position="93"/>
        <end position="105"/>
    </location>
</feature>
<dbReference type="EMBL" id="AK095420">
    <property type="protein sequence ID" value="BAC04545.1"/>
    <property type="molecule type" value="mRNA"/>
</dbReference>
<dbReference type="EMBL" id="CR933600">
    <property type="protein sequence ID" value="CAI45924.1"/>
    <property type="molecule type" value="mRNA"/>
</dbReference>
<dbReference type="EMBL" id="AC007610">
    <property type="status" value="NOT_ANNOTATED_CDS"/>
    <property type="molecule type" value="Genomic_DNA"/>
</dbReference>
<dbReference type="EMBL" id="BC022550">
    <property type="protein sequence ID" value="AAH22550.1"/>
    <property type="molecule type" value="mRNA"/>
</dbReference>
<dbReference type="EMBL" id="BC036683">
    <property type="protein sequence ID" value="AAH36683.1"/>
    <property type="molecule type" value="mRNA"/>
</dbReference>
<dbReference type="CCDS" id="CCDS45480.1">
    <molecule id="Q8N9A8-2"/>
</dbReference>
<dbReference type="CCDS" id="CCDS61931.1">
    <molecule id="Q8N9A8-1"/>
</dbReference>
<dbReference type="RefSeq" id="NP_001268718.1">
    <molecule id="Q8N9A8-1"/>
    <property type="nucleotide sequence ID" value="NM_001281789.2"/>
</dbReference>
<dbReference type="RefSeq" id="NP_694993.2">
    <molecule id="Q8N9A8-2"/>
    <property type="nucleotide sequence ID" value="NM_153261.5"/>
</dbReference>
<dbReference type="PDB" id="8UJL">
    <property type="method" value="X-ray"/>
    <property type="resolution" value="1.91 A"/>
    <property type="chains" value="A=91-122"/>
</dbReference>
<dbReference type="PDB" id="8UJM">
    <property type="method" value="X-ray"/>
    <property type="resolution" value="2.16 A"/>
    <property type="chains" value="A/B=91-122"/>
</dbReference>
<dbReference type="PDBsum" id="8UJL"/>
<dbReference type="PDBsum" id="8UJM"/>
<dbReference type="SMR" id="Q8N9A8"/>
<dbReference type="BioGRID" id="129126">
    <property type="interactions" value="9"/>
</dbReference>
<dbReference type="FunCoup" id="Q8N9A8">
    <property type="interactions" value="2062"/>
</dbReference>
<dbReference type="IntAct" id="Q8N9A8">
    <property type="interactions" value="3"/>
</dbReference>
<dbReference type="STRING" id="9606.ENSP00000405635"/>
<dbReference type="GlyGen" id="Q8N9A8">
    <property type="glycosylation" value="1 site, 1 O-linked glycan (1 site)"/>
</dbReference>
<dbReference type="iPTMnet" id="Q8N9A8"/>
<dbReference type="PhosphoSitePlus" id="Q8N9A8"/>
<dbReference type="BioMuta" id="CNEP1R1"/>
<dbReference type="DMDM" id="74729639"/>
<dbReference type="jPOST" id="Q8N9A8"/>
<dbReference type="MassIVE" id="Q8N9A8"/>
<dbReference type="PeptideAtlas" id="Q8N9A8"/>
<dbReference type="ProteomicsDB" id="72513">
    <molecule id="Q8N9A8-1"/>
</dbReference>
<dbReference type="ProteomicsDB" id="72514">
    <molecule id="Q8N9A8-2"/>
</dbReference>
<dbReference type="ProteomicsDB" id="72515">
    <molecule id="Q8N9A8-3"/>
</dbReference>
<dbReference type="Pumba" id="Q8N9A8"/>
<dbReference type="Antibodypedia" id="49431">
    <property type="antibodies" value="14 antibodies from 8 providers"/>
</dbReference>
<dbReference type="DNASU" id="255919"/>
<dbReference type="Ensembl" id="ENST00000427478.7">
    <molecule id="Q8N9A8-1"/>
    <property type="protein sequence ID" value="ENSP00000394224.2"/>
    <property type="gene ID" value="ENSG00000205423.12"/>
</dbReference>
<dbReference type="Ensembl" id="ENST00000458059.7">
    <molecule id="Q8N9A8-2"/>
    <property type="protein sequence ID" value="ENSP00000405635.3"/>
    <property type="gene ID" value="ENSG00000205423.12"/>
</dbReference>
<dbReference type="Ensembl" id="ENST00000565457.5">
    <molecule id="Q8N9A8-1"/>
    <property type="protein sequence ID" value="ENSP00000456686.1"/>
    <property type="gene ID" value="ENSG00000205423.12"/>
</dbReference>
<dbReference type="Ensembl" id="ENST00000566482.5">
    <molecule id="Q8N9A8-3"/>
    <property type="protein sequence ID" value="ENSP00000456294.1"/>
    <property type="gene ID" value="ENSG00000205423.12"/>
</dbReference>
<dbReference type="Ensembl" id="ENST00000568890.5">
    <molecule id="Q8N9A8-3"/>
    <property type="protein sequence ID" value="ENSP00000456913.1"/>
    <property type="gene ID" value="ENSG00000205423.12"/>
</dbReference>
<dbReference type="GeneID" id="255919"/>
<dbReference type="KEGG" id="hsa:255919"/>
<dbReference type="MANE-Select" id="ENST00000427478.7">
    <property type="protein sequence ID" value="ENSP00000394224.2"/>
    <property type="RefSeq nucleotide sequence ID" value="NM_001281789.2"/>
    <property type="RefSeq protein sequence ID" value="NP_001268718.1"/>
</dbReference>
<dbReference type="UCSC" id="uc002eft.5">
    <molecule id="Q8N9A8-1"/>
    <property type="organism name" value="human"/>
</dbReference>
<dbReference type="AGR" id="HGNC:26759"/>
<dbReference type="CTD" id="255919"/>
<dbReference type="DisGeNET" id="255919"/>
<dbReference type="GeneCards" id="CNEP1R1"/>
<dbReference type="HGNC" id="HGNC:26759">
    <property type="gene designation" value="CNEP1R1"/>
</dbReference>
<dbReference type="HPA" id="ENSG00000205423">
    <property type="expression patterns" value="Low tissue specificity"/>
</dbReference>
<dbReference type="neXtProt" id="NX_Q8N9A8"/>
<dbReference type="OpenTargets" id="ENSG00000205423"/>
<dbReference type="PharmGKB" id="PA162406208"/>
<dbReference type="VEuPathDB" id="HostDB:ENSG00000205423"/>
<dbReference type="GeneTree" id="ENSGT00390000008576"/>
<dbReference type="HOGENOM" id="CLU_207390_0_0_1"/>
<dbReference type="InParanoid" id="Q8N9A8"/>
<dbReference type="OMA" id="NHPFFAI"/>
<dbReference type="OrthoDB" id="5786980at2759"/>
<dbReference type="PAN-GO" id="Q8N9A8">
    <property type="GO annotations" value="2 GO annotations based on evolutionary models"/>
</dbReference>
<dbReference type="PhylomeDB" id="Q8N9A8"/>
<dbReference type="TreeFam" id="TF313179"/>
<dbReference type="PathwayCommons" id="Q8N9A8"/>
<dbReference type="Reactome" id="R-HSA-4419969">
    <property type="pathway name" value="Depolymerization of the Nuclear Lamina"/>
</dbReference>
<dbReference type="SignaLink" id="Q8N9A8"/>
<dbReference type="BioGRID-ORCS" id="255919">
    <property type="hits" value="82 hits in 1162 CRISPR screens"/>
</dbReference>
<dbReference type="GenomeRNAi" id="255919"/>
<dbReference type="Pharos" id="Q8N9A8">
    <property type="development level" value="Tbio"/>
</dbReference>
<dbReference type="PRO" id="PR:Q8N9A8"/>
<dbReference type="Proteomes" id="UP000005640">
    <property type="component" value="Chromosome 16"/>
</dbReference>
<dbReference type="RNAct" id="Q8N9A8">
    <property type="molecule type" value="protein"/>
</dbReference>
<dbReference type="Bgee" id="ENSG00000205423">
    <property type="expression patterns" value="Expressed in left ventricle myocardium and 188 other cell types or tissues"/>
</dbReference>
<dbReference type="ExpressionAtlas" id="Q8N9A8">
    <property type="expression patterns" value="baseline and differential"/>
</dbReference>
<dbReference type="GO" id="GO:0005737">
    <property type="term" value="C:cytoplasm"/>
    <property type="evidence" value="ECO:0000314"/>
    <property type="project" value="UniProtKB"/>
</dbReference>
<dbReference type="GO" id="GO:0005829">
    <property type="term" value="C:cytosol"/>
    <property type="evidence" value="ECO:0000314"/>
    <property type="project" value="HPA"/>
</dbReference>
<dbReference type="GO" id="GO:0071595">
    <property type="term" value="C:Nem1-Spo7 phosphatase complex"/>
    <property type="evidence" value="ECO:0000314"/>
    <property type="project" value="UniProtKB"/>
</dbReference>
<dbReference type="GO" id="GO:0005635">
    <property type="term" value="C:nuclear envelope"/>
    <property type="evidence" value="ECO:0000304"/>
    <property type="project" value="Reactome"/>
</dbReference>
<dbReference type="GO" id="GO:0031965">
    <property type="term" value="C:nuclear membrane"/>
    <property type="evidence" value="ECO:0000314"/>
    <property type="project" value="UniProtKB"/>
</dbReference>
<dbReference type="GO" id="GO:0019888">
    <property type="term" value="F:protein phosphatase regulator activity"/>
    <property type="evidence" value="ECO:0000314"/>
    <property type="project" value="UniProtKB"/>
</dbReference>
<dbReference type="GO" id="GO:0006629">
    <property type="term" value="P:lipid metabolic process"/>
    <property type="evidence" value="ECO:0007669"/>
    <property type="project" value="UniProtKB-KW"/>
</dbReference>
<dbReference type="GO" id="GO:0010867">
    <property type="term" value="P:positive regulation of triglyceride biosynthetic process"/>
    <property type="evidence" value="ECO:0000314"/>
    <property type="project" value="UniProtKB"/>
</dbReference>
<dbReference type="GO" id="GO:0034504">
    <property type="term" value="P:protein localization to nucleus"/>
    <property type="evidence" value="ECO:0000314"/>
    <property type="project" value="UniProtKB"/>
</dbReference>
<dbReference type="InterPro" id="IPR019168">
    <property type="entry name" value="NEP1-R1"/>
</dbReference>
<dbReference type="PANTHER" id="PTHR20996">
    <property type="entry name" value="NUCLEAR ENVELOPE PHOSPHATASE-REGULATORY SUBUNIT 1"/>
    <property type="match status" value="1"/>
</dbReference>
<dbReference type="PANTHER" id="PTHR20996:SF1">
    <property type="entry name" value="NUCLEAR ENVELOPE PHOSPHATASE-REGULATORY SUBUNIT 1"/>
    <property type="match status" value="1"/>
</dbReference>
<dbReference type="Pfam" id="PF09771">
    <property type="entry name" value="Tmemb_18A"/>
    <property type="match status" value="1"/>
</dbReference>
<name>NEPR1_HUMAN</name>
<evidence type="ECO:0000255" key="1"/>
<evidence type="ECO:0000269" key="2">
    <source>
    </source>
</evidence>
<evidence type="ECO:0000303" key="3">
    <source>
    </source>
</evidence>
<evidence type="ECO:0000303" key="4">
    <source>
    </source>
</evidence>
<evidence type="ECO:0000305" key="5"/>
<evidence type="ECO:0007744" key="6">
    <source>
    </source>
</evidence>
<evidence type="ECO:0007829" key="7">
    <source>
        <dbReference type="PDB" id="8UJM"/>
    </source>
</evidence>
<keyword id="KW-0002">3D-structure</keyword>
<keyword id="KW-0007">Acetylation</keyword>
<keyword id="KW-0025">Alternative splicing</keyword>
<keyword id="KW-0963">Cytoplasm</keyword>
<keyword id="KW-0443">Lipid metabolism</keyword>
<keyword id="KW-0472">Membrane</keyword>
<keyword id="KW-0539">Nucleus</keyword>
<keyword id="KW-1267">Proteomics identification</keyword>
<keyword id="KW-1185">Reference proteome</keyword>
<keyword id="KW-0812">Transmembrane</keyword>
<keyword id="KW-1133">Transmembrane helix</keyword>